<sequence length="199" mass="22760">MSEEQILNTHNASILLSAANKSHYPQDDLPEIALAGRSNVGKSSFINTILGRKSLARTSSKPGKTQLLNFFNVDDKLRLVDVPGYGYAKVSKAERARWGKMIEEYLTTRQNLRAVVSLVDFRHEPSQDDIQMYEFLKYYEIPVIIVATKADKVPRGRWNKHESMVKKSLNFDQTDAFIIFSSVERIGIDESWDTILEYL</sequence>
<proteinExistence type="inferred from homology"/>
<keyword id="KW-0131">Cell cycle</keyword>
<keyword id="KW-0132">Cell division</keyword>
<keyword id="KW-0342">GTP-binding</keyword>
<keyword id="KW-0460">Magnesium</keyword>
<keyword id="KW-0479">Metal-binding</keyword>
<keyword id="KW-0547">Nucleotide-binding</keyword>
<keyword id="KW-0717">Septation</keyword>
<dbReference type="EMBL" id="FM204884">
    <property type="protein sequence ID" value="CAW99123.1"/>
    <property type="molecule type" value="Genomic_DNA"/>
</dbReference>
<dbReference type="SMR" id="C0MEW6"/>
<dbReference type="KEGG" id="seq:SZO_08930"/>
<dbReference type="eggNOG" id="COG0218">
    <property type="taxonomic scope" value="Bacteria"/>
</dbReference>
<dbReference type="HOGENOM" id="CLU_033732_3_0_9"/>
<dbReference type="Proteomes" id="UP000001368">
    <property type="component" value="Chromosome"/>
</dbReference>
<dbReference type="GO" id="GO:0005829">
    <property type="term" value="C:cytosol"/>
    <property type="evidence" value="ECO:0007669"/>
    <property type="project" value="TreeGrafter"/>
</dbReference>
<dbReference type="GO" id="GO:0005525">
    <property type="term" value="F:GTP binding"/>
    <property type="evidence" value="ECO:0007669"/>
    <property type="project" value="UniProtKB-UniRule"/>
</dbReference>
<dbReference type="GO" id="GO:0046872">
    <property type="term" value="F:metal ion binding"/>
    <property type="evidence" value="ECO:0007669"/>
    <property type="project" value="UniProtKB-KW"/>
</dbReference>
<dbReference type="GO" id="GO:0000917">
    <property type="term" value="P:division septum assembly"/>
    <property type="evidence" value="ECO:0007669"/>
    <property type="project" value="UniProtKB-KW"/>
</dbReference>
<dbReference type="CDD" id="cd01876">
    <property type="entry name" value="YihA_EngB"/>
    <property type="match status" value="1"/>
</dbReference>
<dbReference type="FunFam" id="3.40.50.300:FF:000098">
    <property type="entry name" value="Probable GTP-binding protein EngB"/>
    <property type="match status" value="1"/>
</dbReference>
<dbReference type="Gene3D" id="3.40.50.300">
    <property type="entry name" value="P-loop containing nucleotide triphosphate hydrolases"/>
    <property type="match status" value="1"/>
</dbReference>
<dbReference type="HAMAP" id="MF_00321">
    <property type="entry name" value="GTPase_EngB"/>
    <property type="match status" value="1"/>
</dbReference>
<dbReference type="InterPro" id="IPR030393">
    <property type="entry name" value="G_ENGB_dom"/>
</dbReference>
<dbReference type="InterPro" id="IPR006073">
    <property type="entry name" value="GTP-bd"/>
</dbReference>
<dbReference type="InterPro" id="IPR019987">
    <property type="entry name" value="GTP-bd_ribosome_bio_YsxC"/>
</dbReference>
<dbReference type="InterPro" id="IPR027417">
    <property type="entry name" value="P-loop_NTPase"/>
</dbReference>
<dbReference type="InterPro" id="IPR005225">
    <property type="entry name" value="Small_GTP-bd"/>
</dbReference>
<dbReference type="NCBIfam" id="TIGR03598">
    <property type="entry name" value="GTPase_YsxC"/>
    <property type="match status" value="1"/>
</dbReference>
<dbReference type="NCBIfam" id="TIGR00231">
    <property type="entry name" value="small_GTP"/>
    <property type="match status" value="1"/>
</dbReference>
<dbReference type="PANTHER" id="PTHR11649:SF13">
    <property type="entry name" value="ENGB-TYPE G DOMAIN-CONTAINING PROTEIN"/>
    <property type="match status" value="1"/>
</dbReference>
<dbReference type="PANTHER" id="PTHR11649">
    <property type="entry name" value="MSS1/TRME-RELATED GTP-BINDING PROTEIN"/>
    <property type="match status" value="1"/>
</dbReference>
<dbReference type="Pfam" id="PF01926">
    <property type="entry name" value="MMR_HSR1"/>
    <property type="match status" value="1"/>
</dbReference>
<dbReference type="SUPFAM" id="SSF52540">
    <property type="entry name" value="P-loop containing nucleoside triphosphate hydrolases"/>
    <property type="match status" value="1"/>
</dbReference>
<dbReference type="PROSITE" id="PS51706">
    <property type="entry name" value="G_ENGB"/>
    <property type="match status" value="1"/>
</dbReference>
<gene>
    <name evidence="1" type="primary">engB</name>
    <name type="ordered locus">SZO_08930</name>
</gene>
<evidence type="ECO:0000255" key="1">
    <source>
        <dbReference type="HAMAP-Rule" id="MF_00321"/>
    </source>
</evidence>
<comment type="function">
    <text evidence="1">Necessary for normal cell division and for the maintenance of normal septation.</text>
</comment>
<comment type="cofactor">
    <cofactor evidence="1">
        <name>Mg(2+)</name>
        <dbReference type="ChEBI" id="CHEBI:18420"/>
    </cofactor>
</comment>
<comment type="similarity">
    <text evidence="1">Belongs to the TRAFAC class TrmE-Era-EngA-EngB-Septin-like GTPase superfamily. EngB GTPase family.</text>
</comment>
<protein>
    <recommendedName>
        <fullName evidence="1">Probable GTP-binding protein EngB</fullName>
    </recommendedName>
</protein>
<name>ENGB_STRS7</name>
<accession>C0MEW6</accession>
<feature type="chain" id="PRO_1000205138" description="Probable GTP-binding protein EngB">
    <location>
        <begin position="1"/>
        <end position="199"/>
    </location>
</feature>
<feature type="domain" description="EngB-type G" evidence="1">
    <location>
        <begin position="28"/>
        <end position="199"/>
    </location>
</feature>
<feature type="binding site" evidence="1">
    <location>
        <begin position="36"/>
        <end position="43"/>
    </location>
    <ligand>
        <name>GTP</name>
        <dbReference type="ChEBI" id="CHEBI:37565"/>
    </ligand>
</feature>
<feature type="binding site" evidence="1">
    <location>
        <position position="43"/>
    </location>
    <ligand>
        <name>Mg(2+)</name>
        <dbReference type="ChEBI" id="CHEBI:18420"/>
    </ligand>
</feature>
<feature type="binding site" evidence="1">
    <location>
        <begin position="63"/>
        <end position="67"/>
    </location>
    <ligand>
        <name>GTP</name>
        <dbReference type="ChEBI" id="CHEBI:37565"/>
    </ligand>
</feature>
<feature type="binding site" evidence="1">
    <location>
        <position position="65"/>
    </location>
    <ligand>
        <name>Mg(2+)</name>
        <dbReference type="ChEBI" id="CHEBI:18420"/>
    </ligand>
</feature>
<feature type="binding site" evidence="1">
    <location>
        <begin position="81"/>
        <end position="84"/>
    </location>
    <ligand>
        <name>GTP</name>
        <dbReference type="ChEBI" id="CHEBI:37565"/>
    </ligand>
</feature>
<feature type="binding site" evidence="1">
    <location>
        <begin position="148"/>
        <end position="151"/>
    </location>
    <ligand>
        <name>GTP</name>
        <dbReference type="ChEBI" id="CHEBI:37565"/>
    </ligand>
</feature>
<feature type="binding site" evidence="1">
    <location>
        <begin position="180"/>
        <end position="182"/>
    </location>
    <ligand>
        <name>GTP</name>
        <dbReference type="ChEBI" id="CHEBI:37565"/>
    </ligand>
</feature>
<reference key="1">
    <citation type="journal article" date="2009" name="PLoS Pathog.">
        <title>Genomic evidence for the evolution of Streptococcus equi: host restriction, increased virulence, and genetic exchange with human pathogens.</title>
        <authorList>
            <person name="Holden M.T.G."/>
            <person name="Heather Z."/>
            <person name="Paillot R."/>
            <person name="Steward K.F."/>
            <person name="Webb K."/>
            <person name="Ainslie F."/>
            <person name="Jourdan T."/>
            <person name="Bason N.C."/>
            <person name="Holroyd N.E."/>
            <person name="Mungall K."/>
            <person name="Quail M.A."/>
            <person name="Sanders M."/>
            <person name="Simmonds M."/>
            <person name="Willey D."/>
            <person name="Brooks K."/>
            <person name="Aanensen D.M."/>
            <person name="Spratt B.G."/>
            <person name="Jolley K.A."/>
            <person name="Maiden M.C.J."/>
            <person name="Kehoe M."/>
            <person name="Chanter N."/>
            <person name="Bentley S.D."/>
            <person name="Robinson C."/>
            <person name="Maskell D.J."/>
            <person name="Parkhill J."/>
            <person name="Waller A.S."/>
        </authorList>
    </citation>
    <scope>NUCLEOTIDE SEQUENCE [LARGE SCALE GENOMIC DNA]</scope>
    <source>
        <strain>H70</strain>
    </source>
</reference>
<organism>
    <name type="scientific">Streptococcus equi subsp. zooepidemicus (strain H70)</name>
    <dbReference type="NCBI Taxonomy" id="553483"/>
    <lineage>
        <taxon>Bacteria</taxon>
        <taxon>Bacillati</taxon>
        <taxon>Bacillota</taxon>
        <taxon>Bacilli</taxon>
        <taxon>Lactobacillales</taxon>
        <taxon>Streptococcaceae</taxon>
        <taxon>Streptococcus</taxon>
    </lineage>
</organism>